<name>HEM1_ECTM1</name>
<proteinExistence type="inferred from homology"/>
<accession>A4XR60</accession>
<protein>
    <recommendedName>
        <fullName evidence="1">Glutamyl-tRNA reductase</fullName>
        <shortName evidence="1">GluTR</shortName>
        <ecNumber evidence="1">1.2.1.70</ecNumber>
    </recommendedName>
</protein>
<sequence length="426" mass="46628">MAFIALGINHKTASVEVRERVAFTPEQLVEALQQLCRLTPSREAAILSTCNRSELYLEQDQLSSDEVLKWLADYHRLSLDELRACAYVHSEQDAVRHMMRVACGLDSMVLGEPQILGQLKSAYAVAREAGTVGPLLGRLFQATFSTAKTVRTDTAIGENPVSVAFAAVSLAKQIFADLHRSQALLIGAGETISLVARHLHDQGIKRIVVANRTLERASQLAEQFGAHAVLLSDIPDELAHSDIVISSTASQLPILGKGAVESALKKRKHKPIFMVDIAVPRDIEPQVGELDDVYLYTVDDLHEVIEENLKSRQGAAQAAEELVAAGTEDFMQRLRELAAVDVLKAYRQQAERLRDEELAKAQRMLVNGASAEDVLAQLARGLTNKLLHAPSVRMKKLTAEGRIDALSLAQELFALDEGAPQDKGLQ</sequence>
<feature type="chain" id="PRO_1000057580" description="Glutamyl-tRNA reductase">
    <location>
        <begin position="1"/>
        <end position="426"/>
    </location>
</feature>
<feature type="active site" description="Nucleophile" evidence="1">
    <location>
        <position position="50"/>
    </location>
</feature>
<feature type="binding site" evidence="1">
    <location>
        <begin position="49"/>
        <end position="52"/>
    </location>
    <ligand>
        <name>substrate</name>
    </ligand>
</feature>
<feature type="binding site" evidence="1">
    <location>
        <position position="107"/>
    </location>
    <ligand>
        <name>substrate</name>
    </ligand>
</feature>
<feature type="binding site" evidence="1">
    <location>
        <begin position="112"/>
        <end position="114"/>
    </location>
    <ligand>
        <name>substrate</name>
    </ligand>
</feature>
<feature type="binding site" evidence="1">
    <location>
        <position position="118"/>
    </location>
    <ligand>
        <name>substrate</name>
    </ligand>
</feature>
<feature type="binding site" evidence="1">
    <location>
        <begin position="187"/>
        <end position="192"/>
    </location>
    <ligand>
        <name>NADP(+)</name>
        <dbReference type="ChEBI" id="CHEBI:58349"/>
    </ligand>
</feature>
<feature type="site" description="Important for activity" evidence="1">
    <location>
        <position position="97"/>
    </location>
</feature>
<reference key="1">
    <citation type="submission" date="2007-04" db="EMBL/GenBank/DDBJ databases">
        <title>Complete sequence of Pseudomonas mendocina ymp.</title>
        <authorList>
            <consortium name="US DOE Joint Genome Institute"/>
            <person name="Copeland A."/>
            <person name="Lucas S."/>
            <person name="Lapidus A."/>
            <person name="Barry K."/>
            <person name="Glavina del Rio T."/>
            <person name="Dalin E."/>
            <person name="Tice H."/>
            <person name="Pitluck S."/>
            <person name="Kiss H."/>
            <person name="Brettin T."/>
            <person name="Detter J.C."/>
            <person name="Bruce D."/>
            <person name="Han C."/>
            <person name="Schmutz J."/>
            <person name="Larimer F."/>
            <person name="Land M."/>
            <person name="Hauser L."/>
            <person name="Kyrpides N."/>
            <person name="Mikhailova N."/>
            <person name="Hersman L."/>
            <person name="Dubois J."/>
            <person name="Maurice P."/>
            <person name="Richardson P."/>
        </authorList>
    </citation>
    <scope>NUCLEOTIDE SEQUENCE [LARGE SCALE GENOMIC DNA]</scope>
    <source>
        <strain>ymp</strain>
    </source>
</reference>
<evidence type="ECO:0000255" key="1">
    <source>
        <dbReference type="HAMAP-Rule" id="MF_00087"/>
    </source>
</evidence>
<gene>
    <name evidence="1" type="primary">hemA</name>
    <name type="ordered locus">Pmen_1059</name>
</gene>
<organism>
    <name type="scientific">Ectopseudomonas mendocina (strain ymp)</name>
    <name type="common">Pseudomonas mendocina</name>
    <dbReference type="NCBI Taxonomy" id="399739"/>
    <lineage>
        <taxon>Bacteria</taxon>
        <taxon>Pseudomonadati</taxon>
        <taxon>Pseudomonadota</taxon>
        <taxon>Gammaproteobacteria</taxon>
        <taxon>Pseudomonadales</taxon>
        <taxon>Pseudomonadaceae</taxon>
        <taxon>Ectopseudomonas</taxon>
    </lineage>
</organism>
<dbReference type="EC" id="1.2.1.70" evidence="1"/>
<dbReference type="EMBL" id="CP000680">
    <property type="protein sequence ID" value="ABP83826.1"/>
    <property type="molecule type" value="Genomic_DNA"/>
</dbReference>
<dbReference type="SMR" id="A4XR60"/>
<dbReference type="STRING" id="399739.Pmen_1059"/>
<dbReference type="KEGG" id="pmy:Pmen_1059"/>
<dbReference type="PATRIC" id="fig|399739.8.peg.1069"/>
<dbReference type="eggNOG" id="COG0373">
    <property type="taxonomic scope" value="Bacteria"/>
</dbReference>
<dbReference type="HOGENOM" id="CLU_035113_2_2_6"/>
<dbReference type="OrthoDB" id="110209at2"/>
<dbReference type="UniPathway" id="UPA00251">
    <property type="reaction ID" value="UER00316"/>
</dbReference>
<dbReference type="GO" id="GO:0008883">
    <property type="term" value="F:glutamyl-tRNA reductase activity"/>
    <property type="evidence" value="ECO:0007669"/>
    <property type="project" value="UniProtKB-UniRule"/>
</dbReference>
<dbReference type="GO" id="GO:0050661">
    <property type="term" value="F:NADP binding"/>
    <property type="evidence" value="ECO:0007669"/>
    <property type="project" value="InterPro"/>
</dbReference>
<dbReference type="GO" id="GO:0019353">
    <property type="term" value="P:protoporphyrinogen IX biosynthetic process from glutamate"/>
    <property type="evidence" value="ECO:0007669"/>
    <property type="project" value="TreeGrafter"/>
</dbReference>
<dbReference type="CDD" id="cd05213">
    <property type="entry name" value="NAD_bind_Glutamyl_tRNA_reduct"/>
    <property type="match status" value="1"/>
</dbReference>
<dbReference type="FunFam" id="3.30.460.30:FF:000001">
    <property type="entry name" value="Glutamyl-tRNA reductase"/>
    <property type="match status" value="1"/>
</dbReference>
<dbReference type="FunFam" id="3.40.50.720:FF:000031">
    <property type="entry name" value="Glutamyl-tRNA reductase"/>
    <property type="match status" value="1"/>
</dbReference>
<dbReference type="Gene3D" id="3.30.460.30">
    <property type="entry name" value="Glutamyl-tRNA reductase, N-terminal domain"/>
    <property type="match status" value="1"/>
</dbReference>
<dbReference type="Gene3D" id="3.40.50.720">
    <property type="entry name" value="NAD(P)-binding Rossmann-like Domain"/>
    <property type="match status" value="1"/>
</dbReference>
<dbReference type="HAMAP" id="MF_00087">
    <property type="entry name" value="Glu_tRNA_reductase"/>
    <property type="match status" value="1"/>
</dbReference>
<dbReference type="InterPro" id="IPR000343">
    <property type="entry name" value="4pyrrol_synth_GluRdtase"/>
</dbReference>
<dbReference type="InterPro" id="IPR015896">
    <property type="entry name" value="4pyrrol_synth_GluRdtase_dimer"/>
</dbReference>
<dbReference type="InterPro" id="IPR015895">
    <property type="entry name" value="4pyrrol_synth_GluRdtase_N"/>
</dbReference>
<dbReference type="InterPro" id="IPR018214">
    <property type="entry name" value="GluRdtase_CS"/>
</dbReference>
<dbReference type="InterPro" id="IPR036453">
    <property type="entry name" value="GluRdtase_dimer_dom_sf"/>
</dbReference>
<dbReference type="InterPro" id="IPR036343">
    <property type="entry name" value="GluRdtase_N_sf"/>
</dbReference>
<dbReference type="InterPro" id="IPR036291">
    <property type="entry name" value="NAD(P)-bd_dom_sf"/>
</dbReference>
<dbReference type="InterPro" id="IPR006151">
    <property type="entry name" value="Shikm_DH/Glu-tRNA_Rdtase"/>
</dbReference>
<dbReference type="NCBIfam" id="TIGR01035">
    <property type="entry name" value="hemA"/>
    <property type="match status" value="1"/>
</dbReference>
<dbReference type="PANTHER" id="PTHR43013">
    <property type="entry name" value="GLUTAMYL-TRNA REDUCTASE"/>
    <property type="match status" value="1"/>
</dbReference>
<dbReference type="PANTHER" id="PTHR43013:SF1">
    <property type="entry name" value="GLUTAMYL-TRNA REDUCTASE"/>
    <property type="match status" value="1"/>
</dbReference>
<dbReference type="Pfam" id="PF00745">
    <property type="entry name" value="GlutR_dimer"/>
    <property type="match status" value="1"/>
</dbReference>
<dbReference type="Pfam" id="PF05201">
    <property type="entry name" value="GlutR_N"/>
    <property type="match status" value="1"/>
</dbReference>
<dbReference type="Pfam" id="PF01488">
    <property type="entry name" value="Shikimate_DH"/>
    <property type="match status" value="1"/>
</dbReference>
<dbReference type="PIRSF" id="PIRSF000445">
    <property type="entry name" value="4pyrrol_synth_GluRdtase"/>
    <property type="match status" value="1"/>
</dbReference>
<dbReference type="SUPFAM" id="SSF69742">
    <property type="entry name" value="Glutamyl tRNA-reductase catalytic, N-terminal domain"/>
    <property type="match status" value="1"/>
</dbReference>
<dbReference type="SUPFAM" id="SSF69075">
    <property type="entry name" value="Glutamyl tRNA-reductase dimerization domain"/>
    <property type="match status" value="1"/>
</dbReference>
<dbReference type="SUPFAM" id="SSF51735">
    <property type="entry name" value="NAD(P)-binding Rossmann-fold domains"/>
    <property type="match status" value="1"/>
</dbReference>
<dbReference type="PROSITE" id="PS00747">
    <property type="entry name" value="GLUTR"/>
    <property type="match status" value="1"/>
</dbReference>
<comment type="function">
    <text evidence="1">Catalyzes the NADPH-dependent reduction of glutamyl-tRNA(Glu) to glutamate 1-semialdehyde (GSA).</text>
</comment>
<comment type="catalytic activity">
    <reaction evidence="1">
        <text>(S)-4-amino-5-oxopentanoate + tRNA(Glu) + NADP(+) = L-glutamyl-tRNA(Glu) + NADPH + H(+)</text>
        <dbReference type="Rhea" id="RHEA:12344"/>
        <dbReference type="Rhea" id="RHEA-COMP:9663"/>
        <dbReference type="Rhea" id="RHEA-COMP:9680"/>
        <dbReference type="ChEBI" id="CHEBI:15378"/>
        <dbReference type="ChEBI" id="CHEBI:57501"/>
        <dbReference type="ChEBI" id="CHEBI:57783"/>
        <dbReference type="ChEBI" id="CHEBI:58349"/>
        <dbReference type="ChEBI" id="CHEBI:78442"/>
        <dbReference type="ChEBI" id="CHEBI:78520"/>
        <dbReference type="EC" id="1.2.1.70"/>
    </reaction>
</comment>
<comment type="pathway">
    <text evidence="1">Porphyrin-containing compound metabolism; protoporphyrin-IX biosynthesis; 5-aminolevulinate from L-glutamyl-tRNA(Glu): step 1/2.</text>
</comment>
<comment type="subunit">
    <text evidence="1">Homodimer.</text>
</comment>
<comment type="domain">
    <text evidence="1">Possesses an unusual extended V-shaped dimeric structure with each monomer consisting of three distinct domains arranged along a curved 'spinal' alpha-helix. The N-terminal catalytic domain specifically recognizes the glutamate moiety of the substrate. The second domain is the NADPH-binding domain, and the third C-terminal domain is responsible for dimerization.</text>
</comment>
<comment type="miscellaneous">
    <text evidence="1">During catalysis, the active site Cys acts as a nucleophile attacking the alpha-carbonyl group of tRNA-bound glutamate with the formation of a thioester intermediate between enzyme and glutamate, and the concomitant release of tRNA(Glu). The thioester intermediate is finally reduced by direct hydride transfer from NADPH, to form the product GSA.</text>
</comment>
<comment type="similarity">
    <text evidence="1">Belongs to the glutamyl-tRNA reductase family.</text>
</comment>
<keyword id="KW-0521">NADP</keyword>
<keyword id="KW-0560">Oxidoreductase</keyword>
<keyword id="KW-0627">Porphyrin biosynthesis</keyword>